<name>YCCC_SCHPO</name>
<feature type="chain" id="PRO_0000303937" description="Uncharacterized protein C1795.12c">
    <location>
        <begin position="1"/>
        <end position="112"/>
    </location>
</feature>
<feature type="transmembrane region" description="Helical" evidence="1">
    <location>
        <begin position="90"/>
        <end position="110"/>
    </location>
</feature>
<feature type="modified residue" description="Phosphoserine" evidence="3">
    <location>
        <position position="51"/>
    </location>
</feature>
<feature type="modified residue" description="Phosphoserine" evidence="3">
    <location>
        <position position="53"/>
    </location>
</feature>
<organism>
    <name type="scientific">Schizosaccharomyces pombe (strain 972 / ATCC 24843)</name>
    <name type="common">Fission yeast</name>
    <dbReference type="NCBI Taxonomy" id="284812"/>
    <lineage>
        <taxon>Eukaryota</taxon>
        <taxon>Fungi</taxon>
        <taxon>Dikarya</taxon>
        <taxon>Ascomycota</taxon>
        <taxon>Taphrinomycotina</taxon>
        <taxon>Schizosaccharomycetes</taxon>
        <taxon>Schizosaccharomycetales</taxon>
        <taxon>Schizosaccharomycetaceae</taxon>
        <taxon>Schizosaccharomyces</taxon>
    </lineage>
</organism>
<reference key="1">
    <citation type="journal article" date="2002" name="Nature">
        <title>The genome sequence of Schizosaccharomyces pombe.</title>
        <authorList>
            <person name="Wood V."/>
            <person name="Gwilliam R."/>
            <person name="Rajandream M.A."/>
            <person name="Lyne M.H."/>
            <person name="Lyne R."/>
            <person name="Stewart A."/>
            <person name="Sgouros J.G."/>
            <person name="Peat N."/>
            <person name="Hayles J."/>
            <person name="Baker S.G."/>
            <person name="Basham D."/>
            <person name="Bowman S."/>
            <person name="Brooks K."/>
            <person name="Brown D."/>
            <person name="Brown S."/>
            <person name="Chillingworth T."/>
            <person name="Churcher C.M."/>
            <person name="Collins M."/>
            <person name="Connor R."/>
            <person name="Cronin A."/>
            <person name="Davis P."/>
            <person name="Feltwell T."/>
            <person name="Fraser A."/>
            <person name="Gentles S."/>
            <person name="Goble A."/>
            <person name="Hamlin N."/>
            <person name="Harris D.E."/>
            <person name="Hidalgo J."/>
            <person name="Hodgson G."/>
            <person name="Holroyd S."/>
            <person name="Hornsby T."/>
            <person name="Howarth S."/>
            <person name="Huckle E.J."/>
            <person name="Hunt S."/>
            <person name="Jagels K."/>
            <person name="James K.D."/>
            <person name="Jones L."/>
            <person name="Jones M."/>
            <person name="Leather S."/>
            <person name="McDonald S."/>
            <person name="McLean J."/>
            <person name="Mooney P."/>
            <person name="Moule S."/>
            <person name="Mungall K.L."/>
            <person name="Murphy L.D."/>
            <person name="Niblett D."/>
            <person name="Odell C."/>
            <person name="Oliver K."/>
            <person name="O'Neil S."/>
            <person name="Pearson D."/>
            <person name="Quail M.A."/>
            <person name="Rabbinowitsch E."/>
            <person name="Rutherford K.M."/>
            <person name="Rutter S."/>
            <person name="Saunders D."/>
            <person name="Seeger K."/>
            <person name="Sharp S."/>
            <person name="Skelton J."/>
            <person name="Simmonds M.N."/>
            <person name="Squares R."/>
            <person name="Squares S."/>
            <person name="Stevens K."/>
            <person name="Taylor K."/>
            <person name="Taylor R.G."/>
            <person name="Tivey A."/>
            <person name="Walsh S.V."/>
            <person name="Warren T."/>
            <person name="Whitehead S."/>
            <person name="Woodward J.R."/>
            <person name="Volckaert G."/>
            <person name="Aert R."/>
            <person name="Robben J."/>
            <person name="Grymonprez B."/>
            <person name="Weltjens I."/>
            <person name="Vanstreels E."/>
            <person name="Rieger M."/>
            <person name="Schaefer M."/>
            <person name="Mueller-Auer S."/>
            <person name="Gabel C."/>
            <person name="Fuchs M."/>
            <person name="Duesterhoeft A."/>
            <person name="Fritzc C."/>
            <person name="Holzer E."/>
            <person name="Moestl D."/>
            <person name="Hilbert H."/>
            <person name="Borzym K."/>
            <person name="Langer I."/>
            <person name="Beck A."/>
            <person name="Lehrach H."/>
            <person name="Reinhardt R."/>
            <person name="Pohl T.M."/>
            <person name="Eger P."/>
            <person name="Zimmermann W."/>
            <person name="Wedler H."/>
            <person name="Wambutt R."/>
            <person name="Purnelle B."/>
            <person name="Goffeau A."/>
            <person name="Cadieu E."/>
            <person name="Dreano S."/>
            <person name="Gloux S."/>
            <person name="Lelaure V."/>
            <person name="Mottier S."/>
            <person name="Galibert F."/>
            <person name="Aves S.J."/>
            <person name="Xiang Z."/>
            <person name="Hunt C."/>
            <person name="Moore K."/>
            <person name="Hurst S.M."/>
            <person name="Lucas M."/>
            <person name="Rochet M."/>
            <person name="Gaillardin C."/>
            <person name="Tallada V.A."/>
            <person name="Garzon A."/>
            <person name="Thode G."/>
            <person name="Daga R.R."/>
            <person name="Cruzado L."/>
            <person name="Jimenez J."/>
            <person name="Sanchez M."/>
            <person name="del Rey F."/>
            <person name="Benito J."/>
            <person name="Dominguez A."/>
            <person name="Revuelta J.L."/>
            <person name="Moreno S."/>
            <person name="Armstrong J."/>
            <person name="Forsburg S.L."/>
            <person name="Cerutti L."/>
            <person name="Lowe T."/>
            <person name="McCombie W.R."/>
            <person name="Paulsen I."/>
            <person name="Potashkin J."/>
            <person name="Shpakovski G.V."/>
            <person name="Ussery D."/>
            <person name="Barrell B.G."/>
            <person name="Nurse P."/>
        </authorList>
    </citation>
    <scope>NUCLEOTIDE SEQUENCE [LARGE SCALE GENOMIC DNA]</scope>
    <source>
        <strain>972 / ATCC 24843</strain>
    </source>
</reference>
<reference key="2">
    <citation type="journal article" date="2006" name="Nat. Biotechnol.">
        <title>ORFeome cloning and global analysis of protein localization in the fission yeast Schizosaccharomyces pombe.</title>
        <authorList>
            <person name="Matsuyama A."/>
            <person name="Arai R."/>
            <person name="Yashiroda Y."/>
            <person name="Shirai A."/>
            <person name="Kamata A."/>
            <person name="Sekido S."/>
            <person name="Kobayashi Y."/>
            <person name="Hashimoto A."/>
            <person name="Hamamoto M."/>
            <person name="Hiraoka Y."/>
            <person name="Horinouchi S."/>
            <person name="Yoshida M."/>
        </authorList>
    </citation>
    <scope>SUBCELLULAR LOCATION [LARGE SCALE ANALYSIS]</scope>
</reference>
<reference key="3">
    <citation type="journal article" date="2008" name="J. Proteome Res.">
        <title>Phosphoproteome analysis of fission yeast.</title>
        <authorList>
            <person name="Wilson-Grady J.T."/>
            <person name="Villen J."/>
            <person name="Gygi S.P."/>
        </authorList>
    </citation>
    <scope>PHOSPHORYLATION [LARGE SCALE ANALYSIS] AT SER-51 AND SER-53</scope>
    <scope>IDENTIFICATION BY MASS SPECTROMETRY</scope>
</reference>
<gene>
    <name type="ORF">SPCC1795.12c</name>
</gene>
<accession>O59776</accession>
<protein>
    <recommendedName>
        <fullName>Uncharacterized protein C1795.12c</fullName>
    </recommendedName>
</protein>
<sequence>MYRPTTTSYSPVYTGNPLYDISASQSDPRQRIRKNVRFQTEVDEFPDFDDSDSDELQFENRDPRKRIDPIKHMLLVQRLKRVSTSSRRLFIFTLSMFLIAFILLIAFVSFRD</sequence>
<comment type="subcellular location">
    <subcellularLocation>
        <location evidence="2">Golgi apparatus membrane</location>
        <topology evidence="2">Single-pass membrane protein</topology>
    </subcellularLocation>
    <subcellularLocation>
        <location evidence="2">Endoplasmic reticulum membrane</location>
        <topology evidence="2">Single-pass membrane protein</topology>
    </subcellularLocation>
</comment>
<proteinExistence type="evidence at protein level"/>
<evidence type="ECO:0000255" key="1"/>
<evidence type="ECO:0000269" key="2">
    <source>
    </source>
</evidence>
<evidence type="ECO:0000269" key="3">
    <source>
    </source>
</evidence>
<keyword id="KW-0256">Endoplasmic reticulum</keyword>
<keyword id="KW-0333">Golgi apparatus</keyword>
<keyword id="KW-0472">Membrane</keyword>
<keyword id="KW-0597">Phosphoprotein</keyword>
<keyword id="KW-1185">Reference proteome</keyword>
<keyword id="KW-0812">Transmembrane</keyword>
<keyword id="KW-1133">Transmembrane helix</keyword>
<dbReference type="EMBL" id="CU329672">
    <property type="protein sequence ID" value="CAA18647.1"/>
    <property type="molecule type" value="Genomic_DNA"/>
</dbReference>
<dbReference type="PIR" id="T41131">
    <property type="entry name" value="T41131"/>
</dbReference>
<dbReference type="RefSeq" id="NP_588032.1">
    <property type="nucleotide sequence ID" value="NM_001023024.2"/>
</dbReference>
<dbReference type="SMR" id="O59776"/>
<dbReference type="BioGRID" id="275696">
    <property type="interactions" value="5"/>
</dbReference>
<dbReference type="iPTMnet" id="O59776"/>
<dbReference type="PaxDb" id="4896-SPCC1795.12c.1"/>
<dbReference type="EnsemblFungi" id="SPCC1795.12c.1">
    <property type="protein sequence ID" value="SPCC1795.12c.1:pep"/>
    <property type="gene ID" value="SPCC1795.12c"/>
</dbReference>
<dbReference type="KEGG" id="spo:2539124"/>
<dbReference type="PomBase" id="SPCC1795.12c"/>
<dbReference type="VEuPathDB" id="FungiDB:SPCC1795.12c"/>
<dbReference type="HOGENOM" id="CLU_173502_0_0_1"/>
<dbReference type="InParanoid" id="O59776"/>
<dbReference type="OMA" id="PIQHMLL"/>
<dbReference type="PRO" id="PR:O59776"/>
<dbReference type="Proteomes" id="UP000002485">
    <property type="component" value="Chromosome III"/>
</dbReference>
<dbReference type="GO" id="GO:0005737">
    <property type="term" value="C:cytoplasm"/>
    <property type="evidence" value="ECO:0007005"/>
    <property type="project" value="PomBase"/>
</dbReference>
<dbReference type="GO" id="GO:0005783">
    <property type="term" value="C:endoplasmic reticulum"/>
    <property type="evidence" value="ECO:0007005"/>
    <property type="project" value="PomBase"/>
</dbReference>
<dbReference type="GO" id="GO:0005789">
    <property type="term" value="C:endoplasmic reticulum membrane"/>
    <property type="evidence" value="ECO:0007669"/>
    <property type="project" value="UniProtKB-SubCell"/>
</dbReference>
<dbReference type="GO" id="GO:0005794">
    <property type="term" value="C:Golgi apparatus"/>
    <property type="evidence" value="ECO:0007005"/>
    <property type="project" value="PomBase"/>
</dbReference>
<dbReference type="GO" id="GO:0000139">
    <property type="term" value="C:Golgi membrane"/>
    <property type="evidence" value="ECO:0007669"/>
    <property type="project" value="UniProtKB-SubCell"/>
</dbReference>